<name>3MGH_CLOBH</name>
<organism>
    <name type="scientific">Clostridium botulinum (strain Hall / ATCC 3502 / NCTC 13319 / Type A)</name>
    <dbReference type="NCBI Taxonomy" id="441771"/>
    <lineage>
        <taxon>Bacteria</taxon>
        <taxon>Bacillati</taxon>
        <taxon>Bacillota</taxon>
        <taxon>Clostridia</taxon>
        <taxon>Eubacteriales</taxon>
        <taxon>Clostridiaceae</taxon>
        <taxon>Clostridium</taxon>
    </lineage>
</organism>
<comment type="similarity">
    <text evidence="1">Belongs to the DNA glycosylase MPG family.</text>
</comment>
<sequence length="203" mass="23581">MRLTRDFYAKDARVLAKELLGKVLVREVDGIKLKGKIVETEAYIGAIDKASHAYGGRRTKRTEPLYGKPGIAYVYFIYGKYFCFNIISKTEGEAEGVLIRALEPLENINLISKLRFNKEFEELNNYQRKNITSGPSKLCMAFNINRDNNWEDLCESSSLYVEDVFYNDFEIIETVRVGIDYAEEARDFLWRYYIKDNAFVSVK</sequence>
<protein>
    <recommendedName>
        <fullName evidence="1">Putative 3-methyladenine DNA glycosylase</fullName>
        <ecNumber evidence="1">3.2.2.-</ecNumber>
    </recommendedName>
</protein>
<proteinExistence type="inferred from homology"/>
<dbReference type="EC" id="3.2.2.-" evidence="1"/>
<dbReference type="EMBL" id="CP000727">
    <property type="protein sequence ID" value="ABS36242.1"/>
    <property type="molecule type" value="Genomic_DNA"/>
</dbReference>
<dbReference type="EMBL" id="AM412317">
    <property type="protein sequence ID" value="CAL82815.1"/>
    <property type="molecule type" value="Genomic_DNA"/>
</dbReference>
<dbReference type="RefSeq" id="WP_003356430.1">
    <property type="nucleotide sequence ID" value="NC_009698.1"/>
</dbReference>
<dbReference type="RefSeq" id="YP_001253789.1">
    <property type="nucleotide sequence ID" value="NC_009495.1"/>
</dbReference>
<dbReference type="RefSeq" id="YP_001387169.1">
    <property type="nucleotide sequence ID" value="NC_009698.1"/>
</dbReference>
<dbReference type="SMR" id="A5I1A3"/>
<dbReference type="GeneID" id="5185520"/>
<dbReference type="KEGG" id="cbh:CLC_1303"/>
<dbReference type="KEGG" id="cbo:CBO1265"/>
<dbReference type="PATRIC" id="fig|413999.7.peg.1251"/>
<dbReference type="HOGENOM" id="CLU_060471_0_2_9"/>
<dbReference type="PRO" id="PR:A5I1A3"/>
<dbReference type="Proteomes" id="UP000001986">
    <property type="component" value="Chromosome"/>
</dbReference>
<dbReference type="GO" id="GO:0003905">
    <property type="term" value="F:alkylbase DNA N-glycosylase activity"/>
    <property type="evidence" value="ECO:0000318"/>
    <property type="project" value="GO_Central"/>
</dbReference>
<dbReference type="GO" id="GO:0003677">
    <property type="term" value="F:DNA binding"/>
    <property type="evidence" value="ECO:0007669"/>
    <property type="project" value="InterPro"/>
</dbReference>
<dbReference type="GO" id="GO:0006284">
    <property type="term" value="P:base-excision repair"/>
    <property type="evidence" value="ECO:0000318"/>
    <property type="project" value="GO_Central"/>
</dbReference>
<dbReference type="CDD" id="cd00540">
    <property type="entry name" value="AAG"/>
    <property type="match status" value="1"/>
</dbReference>
<dbReference type="FunFam" id="3.10.300.10:FF:000001">
    <property type="entry name" value="Putative 3-methyladenine DNA glycosylase"/>
    <property type="match status" value="1"/>
</dbReference>
<dbReference type="Gene3D" id="3.10.300.10">
    <property type="entry name" value="Methylpurine-DNA glycosylase (MPG)"/>
    <property type="match status" value="1"/>
</dbReference>
<dbReference type="HAMAP" id="MF_00527">
    <property type="entry name" value="3MGH"/>
    <property type="match status" value="1"/>
</dbReference>
<dbReference type="InterPro" id="IPR011034">
    <property type="entry name" value="Formyl_transferase-like_C_sf"/>
</dbReference>
<dbReference type="InterPro" id="IPR003180">
    <property type="entry name" value="MPG"/>
</dbReference>
<dbReference type="InterPro" id="IPR036995">
    <property type="entry name" value="MPG_sf"/>
</dbReference>
<dbReference type="NCBIfam" id="TIGR00567">
    <property type="entry name" value="3mg"/>
    <property type="match status" value="1"/>
</dbReference>
<dbReference type="NCBIfam" id="NF002001">
    <property type="entry name" value="PRK00802.1-1"/>
    <property type="match status" value="1"/>
</dbReference>
<dbReference type="PANTHER" id="PTHR10429">
    <property type="entry name" value="DNA-3-METHYLADENINE GLYCOSYLASE"/>
    <property type="match status" value="1"/>
</dbReference>
<dbReference type="PANTHER" id="PTHR10429:SF0">
    <property type="entry name" value="DNA-3-METHYLADENINE GLYCOSYLASE"/>
    <property type="match status" value="1"/>
</dbReference>
<dbReference type="Pfam" id="PF02245">
    <property type="entry name" value="Pur_DNA_glyco"/>
    <property type="match status" value="1"/>
</dbReference>
<dbReference type="SUPFAM" id="SSF50486">
    <property type="entry name" value="FMT C-terminal domain-like"/>
    <property type="match status" value="1"/>
</dbReference>
<accession>A5I1A3</accession>
<accession>A7G304</accession>
<gene>
    <name type="ordered locus">CBO1265</name>
    <name type="ordered locus">CLC_1303</name>
</gene>
<evidence type="ECO:0000255" key="1">
    <source>
        <dbReference type="HAMAP-Rule" id="MF_00527"/>
    </source>
</evidence>
<reference key="1">
    <citation type="journal article" date="2007" name="Genome Res.">
        <title>Genome sequence of a proteolytic (Group I) Clostridium botulinum strain Hall A and comparative analysis of the clostridial genomes.</title>
        <authorList>
            <person name="Sebaihia M."/>
            <person name="Peck M.W."/>
            <person name="Minton N.P."/>
            <person name="Thomson N.R."/>
            <person name="Holden M.T.G."/>
            <person name="Mitchell W.J."/>
            <person name="Carter A.T."/>
            <person name="Bentley S.D."/>
            <person name="Mason D.R."/>
            <person name="Crossman L."/>
            <person name="Paul C.J."/>
            <person name="Ivens A."/>
            <person name="Wells-Bennik M.H.J."/>
            <person name="Davis I.J."/>
            <person name="Cerdeno-Tarraga A.M."/>
            <person name="Churcher C."/>
            <person name="Quail M.A."/>
            <person name="Chillingworth T."/>
            <person name="Feltwell T."/>
            <person name="Fraser A."/>
            <person name="Goodhead I."/>
            <person name="Hance Z."/>
            <person name="Jagels K."/>
            <person name="Larke N."/>
            <person name="Maddison M."/>
            <person name="Moule S."/>
            <person name="Mungall K."/>
            <person name="Norbertczak H."/>
            <person name="Rabbinowitsch E."/>
            <person name="Sanders M."/>
            <person name="Simmonds M."/>
            <person name="White B."/>
            <person name="Whithead S."/>
            <person name="Parkhill J."/>
        </authorList>
    </citation>
    <scope>NUCLEOTIDE SEQUENCE [LARGE SCALE GENOMIC DNA]</scope>
    <source>
        <strain>Hall / ATCC 3502 / NCTC 13319 / Type A</strain>
    </source>
</reference>
<reference key="2">
    <citation type="journal article" date="2007" name="PLoS ONE">
        <title>Analysis of the neurotoxin complex genes in Clostridium botulinum A1-A4 and B1 strains: BoNT/A3, /Ba4 and /B1 clusters are located within plasmids.</title>
        <authorList>
            <person name="Smith T.J."/>
            <person name="Hill K.K."/>
            <person name="Foley B.T."/>
            <person name="Detter J.C."/>
            <person name="Munk A.C."/>
            <person name="Bruce D.C."/>
            <person name="Doggett N.A."/>
            <person name="Smith L.A."/>
            <person name="Marks J.D."/>
            <person name="Xie G."/>
            <person name="Brettin T.S."/>
        </authorList>
    </citation>
    <scope>NUCLEOTIDE SEQUENCE [LARGE SCALE GENOMIC DNA]</scope>
    <source>
        <strain>Hall / ATCC 3502 / NCTC 13319 / Type A</strain>
    </source>
</reference>
<feature type="chain" id="PRO_1000050986" description="Putative 3-methyladenine DNA glycosylase">
    <location>
        <begin position="1"/>
        <end position="203"/>
    </location>
</feature>
<keyword id="KW-0227">DNA damage</keyword>
<keyword id="KW-0234">DNA repair</keyword>
<keyword id="KW-0378">Hydrolase</keyword>
<keyword id="KW-1185">Reference proteome</keyword>